<evidence type="ECO:0000250" key="1"/>
<evidence type="ECO:0000250" key="2">
    <source>
        <dbReference type="UniProtKB" id="P00157"/>
    </source>
</evidence>
<evidence type="ECO:0000255" key="3">
    <source>
        <dbReference type="PROSITE-ProRule" id="PRU00967"/>
    </source>
</evidence>
<evidence type="ECO:0000255" key="4">
    <source>
        <dbReference type="PROSITE-ProRule" id="PRU00968"/>
    </source>
</evidence>
<feature type="chain" id="PRO_0000061109" description="Cytochrome b">
    <location>
        <begin position="1"/>
        <end position="379"/>
    </location>
</feature>
<feature type="transmembrane region" description="Helical" evidence="2">
    <location>
        <begin position="33"/>
        <end position="53"/>
    </location>
</feature>
<feature type="transmembrane region" description="Helical" evidence="2">
    <location>
        <begin position="77"/>
        <end position="98"/>
    </location>
</feature>
<feature type="transmembrane region" description="Helical" evidence="2">
    <location>
        <begin position="113"/>
        <end position="133"/>
    </location>
</feature>
<feature type="transmembrane region" description="Helical" evidence="2">
    <location>
        <begin position="178"/>
        <end position="198"/>
    </location>
</feature>
<feature type="transmembrane region" description="Helical" evidence="2">
    <location>
        <begin position="226"/>
        <end position="246"/>
    </location>
</feature>
<feature type="transmembrane region" description="Helical" evidence="2">
    <location>
        <begin position="288"/>
        <end position="308"/>
    </location>
</feature>
<feature type="transmembrane region" description="Helical" evidence="2">
    <location>
        <begin position="320"/>
        <end position="340"/>
    </location>
</feature>
<feature type="transmembrane region" description="Helical" evidence="2">
    <location>
        <begin position="347"/>
        <end position="367"/>
    </location>
</feature>
<feature type="binding site" description="axial binding residue" evidence="2">
    <location>
        <position position="83"/>
    </location>
    <ligand>
        <name>heme b</name>
        <dbReference type="ChEBI" id="CHEBI:60344"/>
        <label>b562</label>
    </ligand>
    <ligandPart>
        <name>Fe</name>
        <dbReference type="ChEBI" id="CHEBI:18248"/>
    </ligandPart>
</feature>
<feature type="binding site" description="axial binding residue" evidence="2">
    <location>
        <position position="97"/>
    </location>
    <ligand>
        <name>heme b</name>
        <dbReference type="ChEBI" id="CHEBI:60344"/>
        <label>b566</label>
    </ligand>
    <ligandPart>
        <name>Fe</name>
        <dbReference type="ChEBI" id="CHEBI:18248"/>
    </ligandPart>
</feature>
<feature type="binding site" description="axial binding residue" evidence="2">
    <location>
        <position position="182"/>
    </location>
    <ligand>
        <name>heme b</name>
        <dbReference type="ChEBI" id="CHEBI:60344"/>
        <label>b562</label>
    </ligand>
    <ligandPart>
        <name>Fe</name>
        <dbReference type="ChEBI" id="CHEBI:18248"/>
    </ligandPart>
</feature>
<feature type="binding site" description="axial binding residue" evidence="2">
    <location>
        <position position="196"/>
    </location>
    <ligand>
        <name>heme b</name>
        <dbReference type="ChEBI" id="CHEBI:60344"/>
        <label>b566</label>
    </ligand>
    <ligandPart>
        <name>Fe</name>
        <dbReference type="ChEBI" id="CHEBI:18248"/>
    </ligandPart>
</feature>
<feature type="binding site" evidence="2">
    <location>
        <position position="201"/>
    </location>
    <ligand>
        <name>a ubiquinone</name>
        <dbReference type="ChEBI" id="CHEBI:16389"/>
    </ligand>
</feature>
<gene>
    <name type="primary">MT-CYB</name>
    <name type="synonym">COB</name>
    <name type="synonym">CYTB</name>
    <name type="synonym">MTCYB</name>
</gene>
<comment type="function">
    <text evidence="2">Component of the ubiquinol-cytochrome c reductase complex (complex III or cytochrome b-c1 complex) that is part of the mitochondrial respiratory chain. The b-c1 complex mediates electron transfer from ubiquinol to cytochrome c. Contributes to the generation of a proton gradient across the mitochondrial membrane that is then used for ATP synthesis.</text>
</comment>
<comment type="cofactor">
    <cofactor evidence="2">
        <name>heme b</name>
        <dbReference type="ChEBI" id="CHEBI:60344"/>
    </cofactor>
    <text evidence="2">Binds 2 heme b groups non-covalently.</text>
</comment>
<comment type="subunit">
    <text evidence="2">The cytochrome bc1 complex contains 11 subunits: 3 respiratory subunits (MT-CYB, CYC1 and UQCRFS1), 2 core proteins (UQCRC1 and UQCRC2) and 6 low-molecular weight proteins (UQCRH/QCR6, UQCRB/QCR7, UQCRQ/QCR8, UQCR10/QCR9, UQCR11/QCR10 and a cleavage product of UQCRFS1). This cytochrome bc1 complex then forms a dimer.</text>
</comment>
<comment type="subcellular location">
    <subcellularLocation>
        <location evidence="2">Mitochondrion inner membrane</location>
        <topology evidence="2">Multi-pass membrane protein</topology>
    </subcellularLocation>
</comment>
<comment type="miscellaneous">
    <text evidence="1">Heme 1 (or BL or b562) is low-potential and absorbs at about 562 nm, and heme 2 (or BH or b566) is high-potential and absorbs at about 566 nm.</text>
</comment>
<comment type="similarity">
    <text evidence="3 4">Belongs to the cytochrome b family.</text>
</comment>
<comment type="caution">
    <text evidence="2">The full-length protein contains only eight transmembrane helices, not nine as predicted by bioinformatics tools.</text>
</comment>
<geneLocation type="mitochondrion"/>
<organism>
    <name type="scientific">Lepilemur ruficaudatus</name>
    <name type="common">Red-tailed sportive lemur</name>
    <dbReference type="NCBI Taxonomy" id="78866"/>
    <lineage>
        <taxon>Eukaryota</taxon>
        <taxon>Metazoa</taxon>
        <taxon>Chordata</taxon>
        <taxon>Craniata</taxon>
        <taxon>Vertebrata</taxon>
        <taxon>Euteleostomi</taxon>
        <taxon>Mammalia</taxon>
        <taxon>Eutheria</taxon>
        <taxon>Euarchontoglires</taxon>
        <taxon>Primates</taxon>
        <taxon>Strepsirrhini</taxon>
        <taxon>Lemuriformes</taxon>
        <taxon>Lepilemuridae</taxon>
        <taxon>Lepilemur</taxon>
    </lineage>
</organism>
<proteinExistence type="inferred from homology"/>
<accession>Q5VJ50</accession>
<reference key="1">
    <citation type="submission" date="2003-10" db="EMBL/GenBank/DDBJ databases">
        <title>61 primate SINEs and the evolution of strepsirrhines.</title>
        <authorList>
            <person name="Roos C."/>
            <person name="Schmitz J."/>
            <person name="Zischler H."/>
        </authorList>
    </citation>
    <scope>NUCLEOTIDE SEQUENCE [GENOMIC DNA]</scope>
</reference>
<sequence length="379" mass="42722">MTNTRKNHPLMKIINNSFIDLPTPPNISSLWNFGSLLGACLTIQVITGLFLAMHYTADTTTAFSSVTHICRDVNYGWTIRYLHANGASMFFMCLFIHVGRGLYYGSFALLETWNIGIMLLFSVMATAFMGYVLPWGQMSFWGATVITNLLSAIPYVGTNLVEWIWGGFSVGKPTLTRFFALHFILPFIISALAMIHLLFLHETGSNNPLGMSSNSDKIPFHPYYTTKDFLGLLLLILLLMTLTLFYPDLLGDPDNYTPANPLNTPPHIKPEWYFLFAYAILRSIPNKPGGVVALILSILILAIIPFLQPSKQQTMMFRPLSQFLFWILVADLLTLTWIGGQPVENPFISIGQTASILYFSLMVFIMPMTCLIENKMLKW</sequence>
<protein>
    <recommendedName>
        <fullName>Cytochrome b</fullName>
    </recommendedName>
    <alternativeName>
        <fullName>Complex III subunit 3</fullName>
    </alternativeName>
    <alternativeName>
        <fullName>Complex III subunit III</fullName>
    </alternativeName>
    <alternativeName>
        <fullName>Cytochrome b-c1 complex subunit 3</fullName>
    </alternativeName>
    <alternativeName>
        <fullName>Ubiquinol-cytochrome-c reductase complex cytochrome b subunit</fullName>
    </alternativeName>
</protein>
<keyword id="KW-0249">Electron transport</keyword>
<keyword id="KW-0349">Heme</keyword>
<keyword id="KW-0408">Iron</keyword>
<keyword id="KW-0472">Membrane</keyword>
<keyword id="KW-0479">Metal-binding</keyword>
<keyword id="KW-0496">Mitochondrion</keyword>
<keyword id="KW-0999">Mitochondrion inner membrane</keyword>
<keyword id="KW-0679">Respiratory chain</keyword>
<keyword id="KW-0812">Transmembrane</keyword>
<keyword id="KW-1133">Transmembrane helix</keyword>
<keyword id="KW-0813">Transport</keyword>
<keyword id="KW-0830">Ubiquinone</keyword>
<name>CYB_LEPRU</name>
<dbReference type="EMBL" id="AY441463">
    <property type="protein sequence ID" value="AAS00144.1"/>
    <property type="molecule type" value="Genomic_DNA"/>
</dbReference>
<dbReference type="SMR" id="Q5VJ50"/>
<dbReference type="GO" id="GO:0005743">
    <property type="term" value="C:mitochondrial inner membrane"/>
    <property type="evidence" value="ECO:0007669"/>
    <property type="project" value="UniProtKB-SubCell"/>
</dbReference>
<dbReference type="GO" id="GO:0045275">
    <property type="term" value="C:respiratory chain complex III"/>
    <property type="evidence" value="ECO:0007669"/>
    <property type="project" value="InterPro"/>
</dbReference>
<dbReference type="GO" id="GO:0046872">
    <property type="term" value="F:metal ion binding"/>
    <property type="evidence" value="ECO:0007669"/>
    <property type="project" value="UniProtKB-KW"/>
</dbReference>
<dbReference type="GO" id="GO:0008121">
    <property type="term" value="F:ubiquinol-cytochrome-c reductase activity"/>
    <property type="evidence" value="ECO:0007669"/>
    <property type="project" value="InterPro"/>
</dbReference>
<dbReference type="GO" id="GO:0006122">
    <property type="term" value="P:mitochondrial electron transport, ubiquinol to cytochrome c"/>
    <property type="evidence" value="ECO:0007669"/>
    <property type="project" value="TreeGrafter"/>
</dbReference>
<dbReference type="CDD" id="cd00290">
    <property type="entry name" value="cytochrome_b_C"/>
    <property type="match status" value="1"/>
</dbReference>
<dbReference type="CDD" id="cd00284">
    <property type="entry name" value="Cytochrome_b_N"/>
    <property type="match status" value="1"/>
</dbReference>
<dbReference type="FunFam" id="1.20.810.10:FF:000002">
    <property type="entry name" value="Cytochrome b"/>
    <property type="match status" value="1"/>
</dbReference>
<dbReference type="Gene3D" id="1.20.810.10">
    <property type="entry name" value="Cytochrome Bc1 Complex, Chain C"/>
    <property type="match status" value="1"/>
</dbReference>
<dbReference type="InterPro" id="IPR005798">
    <property type="entry name" value="Cyt_b/b6_C"/>
</dbReference>
<dbReference type="InterPro" id="IPR036150">
    <property type="entry name" value="Cyt_b/b6_C_sf"/>
</dbReference>
<dbReference type="InterPro" id="IPR005797">
    <property type="entry name" value="Cyt_b/b6_N"/>
</dbReference>
<dbReference type="InterPro" id="IPR027387">
    <property type="entry name" value="Cytb/b6-like_sf"/>
</dbReference>
<dbReference type="InterPro" id="IPR030689">
    <property type="entry name" value="Cytochrome_b"/>
</dbReference>
<dbReference type="InterPro" id="IPR048260">
    <property type="entry name" value="Cytochrome_b_C_euk/bac"/>
</dbReference>
<dbReference type="InterPro" id="IPR048259">
    <property type="entry name" value="Cytochrome_b_N_euk/bac"/>
</dbReference>
<dbReference type="InterPro" id="IPR016174">
    <property type="entry name" value="Di-haem_cyt_TM"/>
</dbReference>
<dbReference type="PANTHER" id="PTHR19271">
    <property type="entry name" value="CYTOCHROME B"/>
    <property type="match status" value="1"/>
</dbReference>
<dbReference type="PANTHER" id="PTHR19271:SF16">
    <property type="entry name" value="CYTOCHROME B"/>
    <property type="match status" value="1"/>
</dbReference>
<dbReference type="Pfam" id="PF00032">
    <property type="entry name" value="Cytochrom_B_C"/>
    <property type="match status" value="1"/>
</dbReference>
<dbReference type="Pfam" id="PF00033">
    <property type="entry name" value="Cytochrome_B"/>
    <property type="match status" value="1"/>
</dbReference>
<dbReference type="PIRSF" id="PIRSF038885">
    <property type="entry name" value="COB"/>
    <property type="match status" value="1"/>
</dbReference>
<dbReference type="SUPFAM" id="SSF81648">
    <property type="entry name" value="a domain/subunit of cytochrome bc1 complex (Ubiquinol-cytochrome c reductase)"/>
    <property type="match status" value="1"/>
</dbReference>
<dbReference type="SUPFAM" id="SSF81342">
    <property type="entry name" value="Transmembrane di-heme cytochromes"/>
    <property type="match status" value="1"/>
</dbReference>
<dbReference type="PROSITE" id="PS51003">
    <property type="entry name" value="CYTB_CTER"/>
    <property type="match status" value="1"/>
</dbReference>
<dbReference type="PROSITE" id="PS51002">
    <property type="entry name" value="CYTB_NTER"/>
    <property type="match status" value="1"/>
</dbReference>